<name>STAR5_MOUSE</name>
<accession>Q9EPQ7</accession>
<accession>Q9CQY0</accession>
<accession>Q9EPQ6</accession>
<reference key="1">
    <citation type="journal article" date="2001" name="Genomics">
        <title>Identification of mesoderm development (mesd) candidate genes by comparative mapping and genome sequence analysis.</title>
        <authorList>
            <person name="Wines M.E."/>
            <person name="Lee L."/>
            <person name="Katari M.S."/>
            <person name="Zhang L."/>
            <person name="DeRossi C."/>
            <person name="Shi Y."/>
            <person name="Perkins S."/>
            <person name="Feldman M."/>
            <person name="McCombie W.R."/>
            <person name="Holdener B.C."/>
        </authorList>
    </citation>
    <scope>NUCLEOTIDE SEQUENCE [MRNA]</scope>
    <source>
        <strain>Swiss Webster / NIH</strain>
    </source>
</reference>
<reference key="2">
    <citation type="journal article" date="2002" name="Proc. Natl. Acad. Sci. U.S.A.">
        <title>The cholesterol-regulated StarD4 gene encodes a StAR-related lipid transfer protein with two closely related homologues, StarD5 and StarD6.</title>
        <authorList>
            <person name="Soccio R.E."/>
            <person name="Adams R.M."/>
            <person name="Romanowski M.J."/>
            <person name="Sehayek E."/>
            <person name="Burley S.K."/>
            <person name="Breslow J.L."/>
        </authorList>
    </citation>
    <scope>NUCLEOTIDE SEQUENCE [MRNA]</scope>
    <source>
        <strain>C57BL/6J</strain>
        <tissue>Liver</tissue>
    </source>
</reference>
<reference key="3">
    <citation type="journal article" date="2005" name="Science">
        <title>The transcriptional landscape of the mammalian genome.</title>
        <authorList>
            <person name="Carninci P."/>
            <person name="Kasukawa T."/>
            <person name="Katayama S."/>
            <person name="Gough J."/>
            <person name="Frith M.C."/>
            <person name="Maeda N."/>
            <person name="Oyama R."/>
            <person name="Ravasi T."/>
            <person name="Lenhard B."/>
            <person name="Wells C."/>
            <person name="Kodzius R."/>
            <person name="Shimokawa K."/>
            <person name="Bajic V.B."/>
            <person name="Brenner S.E."/>
            <person name="Batalov S."/>
            <person name="Forrest A.R."/>
            <person name="Zavolan M."/>
            <person name="Davis M.J."/>
            <person name="Wilming L.G."/>
            <person name="Aidinis V."/>
            <person name="Allen J.E."/>
            <person name="Ambesi-Impiombato A."/>
            <person name="Apweiler R."/>
            <person name="Aturaliya R.N."/>
            <person name="Bailey T.L."/>
            <person name="Bansal M."/>
            <person name="Baxter L."/>
            <person name="Beisel K.W."/>
            <person name="Bersano T."/>
            <person name="Bono H."/>
            <person name="Chalk A.M."/>
            <person name="Chiu K.P."/>
            <person name="Choudhary V."/>
            <person name="Christoffels A."/>
            <person name="Clutterbuck D.R."/>
            <person name="Crowe M.L."/>
            <person name="Dalla E."/>
            <person name="Dalrymple B.P."/>
            <person name="de Bono B."/>
            <person name="Della Gatta G."/>
            <person name="di Bernardo D."/>
            <person name="Down T."/>
            <person name="Engstrom P."/>
            <person name="Fagiolini M."/>
            <person name="Faulkner G."/>
            <person name="Fletcher C.F."/>
            <person name="Fukushima T."/>
            <person name="Furuno M."/>
            <person name="Futaki S."/>
            <person name="Gariboldi M."/>
            <person name="Georgii-Hemming P."/>
            <person name="Gingeras T.R."/>
            <person name="Gojobori T."/>
            <person name="Green R.E."/>
            <person name="Gustincich S."/>
            <person name="Harbers M."/>
            <person name="Hayashi Y."/>
            <person name="Hensch T.K."/>
            <person name="Hirokawa N."/>
            <person name="Hill D."/>
            <person name="Huminiecki L."/>
            <person name="Iacono M."/>
            <person name="Ikeo K."/>
            <person name="Iwama A."/>
            <person name="Ishikawa T."/>
            <person name="Jakt M."/>
            <person name="Kanapin A."/>
            <person name="Katoh M."/>
            <person name="Kawasawa Y."/>
            <person name="Kelso J."/>
            <person name="Kitamura H."/>
            <person name="Kitano H."/>
            <person name="Kollias G."/>
            <person name="Krishnan S.P."/>
            <person name="Kruger A."/>
            <person name="Kummerfeld S.K."/>
            <person name="Kurochkin I.V."/>
            <person name="Lareau L.F."/>
            <person name="Lazarevic D."/>
            <person name="Lipovich L."/>
            <person name="Liu J."/>
            <person name="Liuni S."/>
            <person name="McWilliam S."/>
            <person name="Madan Babu M."/>
            <person name="Madera M."/>
            <person name="Marchionni L."/>
            <person name="Matsuda H."/>
            <person name="Matsuzawa S."/>
            <person name="Miki H."/>
            <person name="Mignone F."/>
            <person name="Miyake S."/>
            <person name="Morris K."/>
            <person name="Mottagui-Tabar S."/>
            <person name="Mulder N."/>
            <person name="Nakano N."/>
            <person name="Nakauchi H."/>
            <person name="Ng P."/>
            <person name="Nilsson R."/>
            <person name="Nishiguchi S."/>
            <person name="Nishikawa S."/>
            <person name="Nori F."/>
            <person name="Ohara O."/>
            <person name="Okazaki Y."/>
            <person name="Orlando V."/>
            <person name="Pang K.C."/>
            <person name="Pavan W.J."/>
            <person name="Pavesi G."/>
            <person name="Pesole G."/>
            <person name="Petrovsky N."/>
            <person name="Piazza S."/>
            <person name="Reed J."/>
            <person name="Reid J.F."/>
            <person name="Ring B.Z."/>
            <person name="Ringwald M."/>
            <person name="Rost B."/>
            <person name="Ruan Y."/>
            <person name="Salzberg S.L."/>
            <person name="Sandelin A."/>
            <person name="Schneider C."/>
            <person name="Schoenbach C."/>
            <person name="Sekiguchi K."/>
            <person name="Semple C.A."/>
            <person name="Seno S."/>
            <person name="Sessa L."/>
            <person name="Sheng Y."/>
            <person name="Shibata Y."/>
            <person name="Shimada H."/>
            <person name="Shimada K."/>
            <person name="Silva D."/>
            <person name="Sinclair B."/>
            <person name="Sperling S."/>
            <person name="Stupka E."/>
            <person name="Sugiura K."/>
            <person name="Sultana R."/>
            <person name="Takenaka Y."/>
            <person name="Taki K."/>
            <person name="Tammoja K."/>
            <person name="Tan S.L."/>
            <person name="Tang S."/>
            <person name="Taylor M.S."/>
            <person name="Tegner J."/>
            <person name="Teichmann S.A."/>
            <person name="Ueda H.R."/>
            <person name="van Nimwegen E."/>
            <person name="Verardo R."/>
            <person name="Wei C.L."/>
            <person name="Yagi K."/>
            <person name="Yamanishi H."/>
            <person name="Zabarovsky E."/>
            <person name="Zhu S."/>
            <person name="Zimmer A."/>
            <person name="Hide W."/>
            <person name="Bult C."/>
            <person name="Grimmond S.M."/>
            <person name="Teasdale R.D."/>
            <person name="Liu E.T."/>
            <person name="Brusic V."/>
            <person name="Quackenbush J."/>
            <person name="Wahlestedt C."/>
            <person name="Mattick J.S."/>
            <person name="Hume D.A."/>
            <person name="Kai C."/>
            <person name="Sasaki D."/>
            <person name="Tomaru Y."/>
            <person name="Fukuda S."/>
            <person name="Kanamori-Katayama M."/>
            <person name="Suzuki M."/>
            <person name="Aoki J."/>
            <person name="Arakawa T."/>
            <person name="Iida J."/>
            <person name="Imamura K."/>
            <person name="Itoh M."/>
            <person name="Kato T."/>
            <person name="Kawaji H."/>
            <person name="Kawagashira N."/>
            <person name="Kawashima T."/>
            <person name="Kojima M."/>
            <person name="Kondo S."/>
            <person name="Konno H."/>
            <person name="Nakano K."/>
            <person name="Ninomiya N."/>
            <person name="Nishio T."/>
            <person name="Okada M."/>
            <person name="Plessy C."/>
            <person name="Shibata K."/>
            <person name="Shiraki T."/>
            <person name="Suzuki S."/>
            <person name="Tagami M."/>
            <person name="Waki K."/>
            <person name="Watahiki A."/>
            <person name="Okamura-Oho Y."/>
            <person name="Suzuki H."/>
            <person name="Kawai J."/>
            <person name="Hayashizaki Y."/>
        </authorList>
    </citation>
    <scope>NUCLEOTIDE SEQUENCE [LARGE SCALE MRNA]</scope>
    <source>
        <strain>C57BL/6J</strain>
        <tissue>Aorta</tissue>
        <tissue>Heart</tissue>
        <tissue>Inner ear</tissue>
        <tissue>Kidney</tissue>
        <tissue>Tongue</tissue>
        <tissue>Vein</tissue>
    </source>
</reference>
<reference key="4">
    <citation type="journal article" date="2004" name="Genome Res.">
        <title>The status, quality, and expansion of the NIH full-length cDNA project: the Mammalian Gene Collection (MGC).</title>
        <authorList>
            <consortium name="The MGC Project Team"/>
        </authorList>
    </citation>
    <scope>NUCLEOTIDE SEQUENCE [LARGE SCALE MRNA]</scope>
    <source>
        <tissue>Olfactory epithelium</tissue>
    </source>
</reference>
<reference key="5">
    <citation type="journal article" date="2010" name="Cell">
        <title>A tissue-specific atlas of mouse protein phosphorylation and expression.</title>
        <authorList>
            <person name="Huttlin E.L."/>
            <person name="Jedrychowski M.P."/>
            <person name="Elias J.E."/>
            <person name="Goswami T."/>
            <person name="Rad R."/>
            <person name="Beausoleil S.A."/>
            <person name="Villen J."/>
            <person name="Haas W."/>
            <person name="Sowa M.E."/>
            <person name="Gygi S.P."/>
        </authorList>
    </citation>
    <scope>IDENTIFICATION BY MASS SPECTROMETRY [LARGE SCALE ANALYSIS]</scope>
    <source>
        <tissue>Brain</tissue>
        <tissue>Brown adipose tissue</tissue>
        <tissue>Kidney</tissue>
        <tissue>Liver</tissue>
    </source>
</reference>
<gene>
    <name type="primary">Stard5</name>
</gene>
<proteinExistence type="evidence at protein level"/>
<protein>
    <recommendedName>
        <fullName>StAR-related lipid transfer protein 5</fullName>
    </recommendedName>
    <alternativeName>
        <fullName>START domain-containing protein 5</fullName>
        <shortName>StARD5</shortName>
    </alternativeName>
</protein>
<organism>
    <name type="scientific">Mus musculus</name>
    <name type="common">Mouse</name>
    <dbReference type="NCBI Taxonomy" id="10090"/>
    <lineage>
        <taxon>Eukaryota</taxon>
        <taxon>Metazoa</taxon>
        <taxon>Chordata</taxon>
        <taxon>Craniata</taxon>
        <taxon>Vertebrata</taxon>
        <taxon>Euteleostomi</taxon>
        <taxon>Mammalia</taxon>
        <taxon>Eutheria</taxon>
        <taxon>Euarchontoglires</taxon>
        <taxon>Glires</taxon>
        <taxon>Rodentia</taxon>
        <taxon>Myomorpha</taxon>
        <taxon>Muroidea</taxon>
        <taxon>Muridae</taxon>
        <taxon>Murinae</taxon>
        <taxon>Mus</taxon>
        <taxon>Mus</taxon>
    </lineage>
</organism>
<sequence length="213" mass="23922">MDPSWATQESEAVAEKVLRYRRDASGWKKCREGNGVSISWRPSEEFPGNLYRGEGILCGTPEEVWDCIKPVASGLREKWDDNVSSFEIVQSITDMLCVSRTSTPSAAMKLISPRDFVDLVLVKKYEDGTISSNATHVEHPLCPPKPGFVRGFNHPCGCFCEPLPGDPNKTNLVTFFQTDLSGYLPQSVVDSFFPRSMAEFYPNLQKAVRKFHH</sequence>
<evidence type="ECO:0000255" key="1">
    <source>
        <dbReference type="PROSITE-ProRule" id="PRU00197"/>
    </source>
</evidence>
<feature type="chain" id="PRO_0000220670" description="StAR-related lipid transfer protein 5">
    <location>
        <begin position="1"/>
        <end position="213"/>
    </location>
</feature>
<feature type="domain" description="START" evidence="1">
    <location>
        <begin position="1"/>
        <end position="213"/>
    </location>
</feature>
<comment type="function">
    <text>May be involved in the intracellular transport of sterols or other lipids. May bind cholesterol or other sterols.</text>
</comment>
<comment type="tissue specificity">
    <text>Expressed in most tissues, with highest levels in liver and in kidney.</text>
</comment>
<keyword id="KW-0445">Lipid transport</keyword>
<keyword id="KW-0446">Lipid-binding</keyword>
<keyword id="KW-1185">Reference proteome</keyword>
<keyword id="KW-0813">Transport</keyword>
<dbReference type="EMBL" id="AY007808">
    <property type="protein sequence ID" value="AAG41056.1"/>
    <property type="molecule type" value="mRNA"/>
</dbReference>
<dbReference type="EMBL" id="AY007809">
    <property type="protein sequence ID" value="AAG41057.1"/>
    <property type="molecule type" value="mRNA"/>
</dbReference>
<dbReference type="EMBL" id="AF480302">
    <property type="protein sequence ID" value="AAL89652.1"/>
    <property type="molecule type" value="mRNA"/>
</dbReference>
<dbReference type="EMBL" id="AK009980">
    <property type="protein sequence ID" value="BAB26624.2"/>
    <property type="molecule type" value="mRNA"/>
</dbReference>
<dbReference type="EMBL" id="AK080060">
    <property type="protein sequence ID" value="BAC37819.1"/>
    <property type="molecule type" value="mRNA"/>
</dbReference>
<dbReference type="EMBL" id="AK085852">
    <property type="protein sequence ID" value="BAC39551.1"/>
    <property type="molecule type" value="mRNA"/>
</dbReference>
<dbReference type="EMBL" id="AK142503">
    <property type="protein sequence ID" value="BAE25090.1"/>
    <property type="molecule type" value="mRNA"/>
</dbReference>
<dbReference type="EMBL" id="AK158178">
    <property type="protein sequence ID" value="BAE34395.1"/>
    <property type="molecule type" value="mRNA"/>
</dbReference>
<dbReference type="EMBL" id="BC058226">
    <property type="protein sequence ID" value="AAH58226.1"/>
    <property type="molecule type" value="mRNA"/>
</dbReference>
<dbReference type="CCDS" id="CCDS21411.1"/>
<dbReference type="RefSeq" id="NP_075866.2">
    <property type="nucleotide sequence ID" value="NM_023377.4"/>
</dbReference>
<dbReference type="SMR" id="Q9EPQ7"/>
<dbReference type="FunCoup" id="Q9EPQ7">
    <property type="interactions" value="26"/>
</dbReference>
<dbReference type="STRING" id="10090.ENSMUSP00000074872"/>
<dbReference type="iPTMnet" id="Q9EPQ7"/>
<dbReference type="PhosphoSitePlus" id="Q9EPQ7"/>
<dbReference type="SwissPalm" id="Q9EPQ7"/>
<dbReference type="jPOST" id="Q9EPQ7"/>
<dbReference type="PaxDb" id="10090-ENSMUSP00000074872"/>
<dbReference type="PeptideAtlas" id="Q9EPQ7"/>
<dbReference type="ProteomicsDB" id="257450"/>
<dbReference type="Pumba" id="Q9EPQ7"/>
<dbReference type="Antibodypedia" id="27966">
    <property type="antibodies" value="158 antibodies from 24 providers"/>
</dbReference>
<dbReference type="DNASU" id="170460"/>
<dbReference type="Ensembl" id="ENSMUST00000075418.15">
    <property type="protein sequence ID" value="ENSMUSP00000074872.8"/>
    <property type="gene ID" value="ENSMUSG00000046027.18"/>
</dbReference>
<dbReference type="GeneID" id="170460"/>
<dbReference type="KEGG" id="mmu:170460"/>
<dbReference type="UCSC" id="uc009idq.1">
    <property type="organism name" value="mouse"/>
</dbReference>
<dbReference type="AGR" id="MGI:2156765"/>
<dbReference type="CTD" id="80765"/>
<dbReference type="MGI" id="MGI:2156765">
    <property type="gene designation" value="Stard5"/>
</dbReference>
<dbReference type="VEuPathDB" id="HostDB:ENSMUSG00000046027"/>
<dbReference type="eggNOG" id="KOG3845">
    <property type="taxonomic scope" value="Eukaryota"/>
</dbReference>
<dbReference type="GeneTree" id="ENSGT00940000159159"/>
<dbReference type="HOGENOM" id="CLU_093200_1_0_1"/>
<dbReference type="InParanoid" id="Q9EPQ7"/>
<dbReference type="OMA" id="PQKVWEC"/>
<dbReference type="OrthoDB" id="196858at2759"/>
<dbReference type="PhylomeDB" id="Q9EPQ7"/>
<dbReference type="Reactome" id="R-MMU-159418">
    <property type="pathway name" value="Recycling of bile acids and salts"/>
</dbReference>
<dbReference type="BioGRID-ORCS" id="170460">
    <property type="hits" value="2 hits in 78 CRISPR screens"/>
</dbReference>
<dbReference type="ChiTaRS" id="Stard5">
    <property type="organism name" value="mouse"/>
</dbReference>
<dbReference type="PRO" id="PR:Q9EPQ7"/>
<dbReference type="Proteomes" id="UP000000589">
    <property type="component" value="Chromosome 7"/>
</dbReference>
<dbReference type="RNAct" id="Q9EPQ7">
    <property type="molecule type" value="protein"/>
</dbReference>
<dbReference type="Bgee" id="ENSMUSG00000046027">
    <property type="expression patterns" value="Expressed in lip and 199 other cell types or tissues"/>
</dbReference>
<dbReference type="ExpressionAtlas" id="Q9EPQ7">
    <property type="expression patterns" value="baseline and differential"/>
</dbReference>
<dbReference type="GO" id="GO:0015485">
    <property type="term" value="F:cholesterol binding"/>
    <property type="evidence" value="ECO:0000247"/>
    <property type="project" value="MGI"/>
</dbReference>
<dbReference type="GO" id="GO:0120020">
    <property type="term" value="F:cholesterol transfer activity"/>
    <property type="evidence" value="ECO:0007669"/>
    <property type="project" value="Ensembl"/>
</dbReference>
<dbReference type="GO" id="GO:0070508">
    <property type="term" value="P:cholesterol import"/>
    <property type="evidence" value="ECO:0007669"/>
    <property type="project" value="Ensembl"/>
</dbReference>
<dbReference type="FunFam" id="3.30.530.20:FF:000031">
    <property type="entry name" value="StAR-related lipid transfer protein 5"/>
    <property type="match status" value="1"/>
</dbReference>
<dbReference type="Gene3D" id="3.30.530.20">
    <property type="match status" value="1"/>
</dbReference>
<dbReference type="InterPro" id="IPR000799">
    <property type="entry name" value="StAR-like"/>
</dbReference>
<dbReference type="InterPro" id="IPR043556">
    <property type="entry name" value="StARD5/6"/>
</dbReference>
<dbReference type="InterPro" id="IPR023393">
    <property type="entry name" value="START-like_dom_sf"/>
</dbReference>
<dbReference type="InterPro" id="IPR002913">
    <property type="entry name" value="START_lipid-bd_dom"/>
</dbReference>
<dbReference type="PANTHER" id="PTHR46374">
    <property type="entry name" value="PROTEIN CBG07384"/>
    <property type="match status" value="1"/>
</dbReference>
<dbReference type="PANTHER" id="PTHR46374:SF3">
    <property type="entry name" value="STAR-RELATED LIPID TRANSFER PROTEIN 5"/>
    <property type="match status" value="1"/>
</dbReference>
<dbReference type="Pfam" id="PF01852">
    <property type="entry name" value="START"/>
    <property type="match status" value="1"/>
</dbReference>
<dbReference type="PRINTS" id="PR00978">
    <property type="entry name" value="STARPROTEIN"/>
</dbReference>
<dbReference type="SMART" id="SM00234">
    <property type="entry name" value="START"/>
    <property type="match status" value="1"/>
</dbReference>
<dbReference type="SUPFAM" id="SSF55961">
    <property type="entry name" value="Bet v1-like"/>
    <property type="match status" value="1"/>
</dbReference>
<dbReference type="PROSITE" id="PS50848">
    <property type="entry name" value="START"/>
    <property type="match status" value="1"/>
</dbReference>